<comment type="function">
    <text evidence="1">Forms part of the ribosomal stalk which helps the ribosome interact with GTP-bound translation factors. Is thus essential for accurate translation.</text>
</comment>
<comment type="subunit">
    <text evidence="1">Homodimer. Part of the ribosomal stalk of the 50S ribosomal subunit. Forms a multimeric L10(L12)X complex, where L10 forms an elongated spine to which 2 to 4 L12 dimers bind in a sequential fashion. Binds GTP-bound translation factors.</text>
</comment>
<comment type="similarity">
    <text evidence="1">Belongs to the bacterial ribosomal protein bL12 family.</text>
</comment>
<protein>
    <recommendedName>
        <fullName evidence="1">Large ribosomal subunit protein bL12</fullName>
    </recommendedName>
    <alternativeName>
        <fullName evidence="2">50S ribosomal protein L7/L12</fullName>
    </alternativeName>
</protein>
<evidence type="ECO:0000255" key="1">
    <source>
        <dbReference type="HAMAP-Rule" id="MF_00368"/>
    </source>
</evidence>
<evidence type="ECO:0000305" key="2"/>
<sequence length="122" mass="12525">MSITKDQILEAFAAMSVMDVVELIEAMEEKFGVSAAAATVAVGGDAGAAAEEQTEFDVVMTSHGDNKVAVIKAVRGATGLGLKEAKTMAESSPIAIKEGVSKEEAEALKKDLEAAGAVVEIK</sequence>
<gene>
    <name evidence="1" type="primary">rplL</name>
    <name type="ordered locus">Sden_0162</name>
</gene>
<proteinExistence type="inferred from homology"/>
<accession>Q12SW7</accession>
<keyword id="KW-1185">Reference proteome</keyword>
<keyword id="KW-0687">Ribonucleoprotein</keyword>
<keyword id="KW-0689">Ribosomal protein</keyword>
<dbReference type="EMBL" id="CP000302">
    <property type="protein sequence ID" value="ABE53459.1"/>
    <property type="molecule type" value="Genomic_DNA"/>
</dbReference>
<dbReference type="RefSeq" id="WP_011494628.1">
    <property type="nucleotide sequence ID" value="NC_007954.1"/>
</dbReference>
<dbReference type="SMR" id="Q12SW7"/>
<dbReference type="STRING" id="318161.Sden_0162"/>
<dbReference type="KEGG" id="sdn:Sden_0162"/>
<dbReference type="eggNOG" id="COG0222">
    <property type="taxonomic scope" value="Bacteria"/>
</dbReference>
<dbReference type="HOGENOM" id="CLU_086499_3_2_6"/>
<dbReference type="OrthoDB" id="9811748at2"/>
<dbReference type="Proteomes" id="UP000001982">
    <property type="component" value="Chromosome"/>
</dbReference>
<dbReference type="GO" id="GO:0022625">
    <property type="term" value="C:cytosolic large ribosomal subunit"/>
    <property type="evidence" value="ECO:0007669"/>
    <property type="project" value="TreeGrafter"/>
</dbReference>
<dbReference type="GO" id="GO:0003729">
    <property type="term" value="F:mRNA binding"/>
    <property type="evidence" value="ECO:0007669"/>
    <property type="project" value="TreeGrafter"/>
</dbReference>
<dbReference type="GO" id="GO:0003735">
    <property type="term" value="F:structural constituent of ribosome"/>
    <property type="evidence" value="ECO:0007669"/>
    <property type="project" value="InterPro"/>
</dbReference>
<dbReference type="GO" id="GO:0006412">
    <property type="term" value="P:translation"/>
    <property type="evidence" value="ECO:0007669"/>
    <property type="project" value="UniProtKB-UniRule"/>
</dbReference>
<dbReference type="CDD" id="cd00387">
    <property type="entry name" value="Ribosomal_L7_L12"/>
    <property type="match status" value="1"/>
</dbReference>
<dbReference type="FunFam" id="1.20.5.710:FF:000001">
    <property type="entry name" value="50S ribosomal protein L7/L12"/>
    <property type="match status" value="1"/>
</dbReference>
<dbReference type="FunFam" id="3.30.1390.10:FF:000001">
    <property type="entry name" value="50S ribosomal protein L7/L12"/>
    <property type="match status" value="1"/>
</dbReference>
<dbReference type="Gene3D" id="3.30.1390.10">
    <property type="match status" value="1"/>
</dbReference>
<dbReference type="Gene3D" id="1.20.5.710">
    <property type="entry name" value="Single helix bin"/>
    <property type="match status" value="1"/>
</dbReference>
<dbReference type="HAMAP" id="MF_00368">
    <property type="entry name" value="Ribosomal_bL12"/>
    <property type="match status" value="1"/>
</dbReference>
<dbReference type="InterPro" id="IPR000206">
    <property type="entry name" value="Ribosomal_bL12"/>
</dbReference>
<dbReference type="InterPro" id="IPR013823">
    <property type="entry name" value="Ribosomal_bL12_C"/>
</dbReference>
<dbReference type="InterPro" id="IPR014719">
    <property type="entry name" value="Ribosomal_bL12_C/ClpS-like"/>
</dbReference>
<dbReference type="InterPro" id="IPR008932">
    <property type="entry name" value="Ribosomal_bL12_oligo"/>
</dbReference>
<dbReference type="InterPro" id="IPR036235">
    <property type="entry name" value="Ribosomal_bL12_oligo_N_sf"/>
</dbReference>
<dbReference type="NCBIfam" id="TIGR00855">
    <property type="entry name" value="L12"/>
    <property type="match status" value="1"/>
</dbReference>
<dbReference type="PANTHER" id="PTHR45987">
    <property type="entry name" value="39S RIBOSOMAL PROTEIN L12"/>
    <property type="match status" value="1"/>
</dbReference>
<dbReference type="PANTHER" id="PTHR45987:SF4">
    <property type="entry name" value="LARGE RIBOSOMAL SUBUNIT PROTEIN BL12M"/>
    <property type="match status" value="1"/>
</dbReference>
<dbReference type="Pfam" id="PF00542">
    <property type="entry name" value="Ribosomal_L12"/>
    <property type="match status" value="1"/>
</dbReference>
<dbReference type="Pfam" id="PF16320">
    <property type="entry name" value="Ribosomal_L12_N"/>
    <property type="match status" value="1"/>
</dbReference>
<dbReference type="SUPFAM" id="SSF54736">
    <property type="entry name" value="ClpS-like"/>
    <property type="match status" value="1"/>
</dbReference>
<dbReference type="SUPFAM" id="SSF48300">
    <property type="entry name" value="Ribosomal protein L7/12, oligomerisation (N-terminal) domain"/>
    <property type="match status" value="1"/>
</dbReference>
<feature type="chain" id="PRO_1000007082" description="Large ribosomal subunit protein bL12">
    <location>
        <begin position="1"/>
        <end position="122"/>
    </location>
</feature>
<organism>
    <name type="scientific">Shewanella denitrificans (strain OS217 / ATCC BAA-1090 / DSM 15013)</name>
    <dbReference type="NCBI Taxonomy" id="318161"/>
    <lineage>
        <taxon>Bacteria</taxon>
        <taxon>Pseudomonadati</taxon>
        <taxon>Pseudomonadota</taxon>
        <taxon>Gammaproteobacteria</taxon>
        <taxon>Alteromonadales</taxon>
        <taxon>Shewanellaceae</taxon>
        <taxon>Shewanella</taxon>
    </lineage>
</organism>
<name>RL7_SHEDO</name>
<reference key="1">
    <citation type="submission" date="2006-03" db="EMBL/GenBank/DDBJ databases">
        <title>Complete sequence of Shewanella denitrificans OS217.</title>
        <authorList>
            <consortium name="US DOE Joint Genome Institute"/>
            <person name="Copeland A."/>
            <person name="Lucas S."/>
            <person name="Lapidus A."/>
            <person name="Barry K."/>
            <person name="Detter J.C."/>
            <person name="Glavina del Rio T."/>
            <person name="Hammon N."/>
            <person name="Israni S."/>
            <person name="Dalin E."/>
            <person name="Tice H."/>
            <person name="Pitluck S."/>
            <person name="Brettin T."/>
            <person name="Bruce D."/>
            <person name="Han C."/>
            <person name="Tapia R."/>
            <person name="Gilna P."/>
            <person name="Kiss H."/>
            <person name="Schmutz J."/>
            <person name="Larimer F."/>
            <person name="Land M."/>
            <person name="Hauser L."/>
            <person name="Kyrpides N."/>
            <person name="Lykidis A."/>
            <person name="Richardson P."/>
        </authorList>
    </citation>
    <scope>NUCLEOTIDE SEQUENCE [LARGE SCALE GENOMIC DNA]</scope>
    <source>
        <strain>OS217 / ATCC BAA-1090 / DSM 15013</strain>
    </source>
</reference>